<feature type="chain" id="PRO_0000142195" description="Imidazole glycerol phosphate synthase subunit HisF">
    <location>
        <begin position="1"/>
        <end position="251"/>
    </location>
</feature>
<feature type="active site" evidence="1">
    <location>
        <position position="11"/>
    </location>
</feature>
<feature type="active site" evidence="1">
    <location>
        <position position="130"/>
    </location>
</feature>
<name>HIS6_PELUB</name>
<reference key="1">
    <citation type="journal article" date="2005" name="Science">
        <title>Genome streamlining in a cosmopolitan oceanic bacterium.</title>
        <authorList>
            <person name="Giovannoni S.J."/>
            <person name="Tripp H.J."/>
            <person name="Givan S."/>
            <person name="Podar M."/>
            <person name="Vergin K.L."/>
            <person name="Baptista D."/>
            <person name="Bibbs L."/>
            <person name="Eads J."/>
            <person name="Richardson T.H."/>
            <person name="Noordewier M."/>
            <person name="Rappe M.S."/>
            <person name="Short J.M."/>
            <person name="Carrington J.C."/>
            <person name="Mathur E.J."/>
        </authorList>
    </citation>
    <scope>NUCLEOTIDE SEQUENCE [LARGE SCALE GENOMIC DNA]</scope>
    <source>
        <strain>HTCC1062</strain>
    </source>
</reference>
<gene>
    <name evidence="1" type="primary">hisF</name>
    <name type="ordered locus">SAR11_0329</name>
</gene>
<dbReference type="EC" id="4.3.2.10" evidence="1"/>
<dbReference type="EMBL" id="CP000084">
    <property type="protein sequence ID" value="AAZ21152.1"/>
    <property type="molecule type" value="Genomic_DNA"/>
</dbReference>
<dbReference type="RefSeq" id="WP_011281631.1">
    <property type="nucleotide sequence ID" value="NC_007205.1"/>
</dbReference>
<dbReference type="SMR" id="Q4FNT7"/>
<dbReference type="STRING" id="335992.SAR11_0329"/>
<dbReference type="GeneID" id="66294828"/>
<dbReference type="KEGG" id="pub:SAR11_0329"/>
<dbReference type="eggNOG" id="COG0107">
    <property type="taxonomic scope" value="Bacteria"/>
</dbReference>
<dbReference type="HOGENOM" id="CLU_048577_4_0_5"/>
<dbReference type="OrthoDB" id="9781903at2"/>
<dbReference type="UniPathway" id="UPA00031">
    <property type="reaction ID" value="UER00010"/>
</dbReference>
<dbReference type="Proteomes" id="UP000002528">
    <property type="component" value="Chromosome"/>
</dbReference>
<dbReference type="GO" id="GO:0005737">
    <property type="term" value="C:cytoplasm"/>
    <property type="evidence" value="ECO:0007669"/>
    <property type="project" value="UniProtKB-SubCell"/>
</dbReference>
<dbReference type="GO" id="GO:0000107">
    <property type="term" value="F:imidazoleglycerol-phosphate synthase activity"/>
    <property type="evidence" value="ECO:0007669"/>
    <property type="project" value="UniProtKB-UniRule"/>
</dbReference>
<dbReference type="GO" id="GO:0016829">
    <property type="term" value="F:lyase activity"/>
    <property type="evidence" value="ECO:0007669"/>
    <property type="project" value="UniProtKB-KW"/>
</dbReference>
<dbReference type="GO" id="GO:0000105">
    <property type="term" value="P:L-histidine biosynthetic process"/>
    <property type="evidence" value="ECO:0007669"/>
    <property type="project" value="UniProtKB-UniRule"/>
</dbReference>
<dbReference type="CDD" id="cd04731">
    <property type="entry name" value="HisF"/>
    <property type="match status" value="1"/>
</dbReference>
<dbReference type="FunFam" id="3.20.20.70:FF:000006">
    <property type="entry name" value="Imidazole glycerol phosphate synthase subunit HisF"/>
    <property type="match status" value="1"/>
</dbReference>
<dbReference type="Gene3D" id="3.20.20.70">
    <property type="entry name" value="Aldolase class I"/>
    <property type="match status" value="1"/>
</dbReference>
<dbReference type="HAMAP" id="MF_01013">
    <property type="entry name" value="HisF"/>
    <property type="match status" value="1"/>
</dbReference>
<dbReference type="InterPro" id="IPR013785">
    <property type="entry name" value="Aldolase_TIM"/>
</dbReference>
<dbReference type="InterPro" id="IPR006062">
    <property type="entry name" value="His_biosynth"/>
</dbReference>
<dbReference type="InterPro" id="IPR004651">
    <property type="entry name" value="HisF"/>
</dbReference>
<dbReference type="InterPro" id="IPR050064">
    <property type="entry name" value="IGPS_HisA/HisF"/>
</dbReference>
<dbReference type="InterPro" id="IPR011060">
    <property type="entry name" value="RibuloseP-bd_barrel"/>
</dbReference>
<dbReference type="NCBIfam" id="TIGR00735">
    <property type="entry name" value="hisF"/>
    <property type="match status" value="1"/>
</dbReference>
<dbReference type="PANTHER" id="PTHR21235:SF2">
    <property type="entry name" value="IMIDAZOLE GLYCEROL PHOSPHATE SYNTHASE HISHF"/>
    <property type="match status" value="1"/>
</dbReference>
<dbReference type="PANTHER" id="PTHR21235">
    <property type="entry name" value="IMIDAZOLE GLYCEROL PHOSPHATE SYNTHASE SUBUNIT HISF/H IGP SYNTHASE SUBUNIT HISF/H"/>
    <property type="match status" value="1"/>
</dbReference>
<dbReference type="Pfam" id="PF00977">
    <property type="entry name" value="His_biosynth"/>
    <property type="match status" value="1"/>
</dbReference>
<dbReference type="SUPFAM" id="SSF51366">
    <property type="entry name" value="Ribulose-phoshate binding barrel"/>
    <property type="match status" value="1"/>
</dbReference>
<proteinExistence type="inferred from homology"/>
<comment type="function">
    <text evidence="1">IGPS catalyzes the conversion of PRFAR and glutamine to IGP, AICAR and glutamate. The HisF subunit catalyzes the cyclization activity that produces IGP and AICAR from PRFAR using the ammonia provided by the HisH subunit.</text>
</comment>
<comment type="catalytic activity">
    <reaction evidence="1">
        <text>5-[(5-phospho-1-deoxy-D-ribulos-1-ylimino)methylamino]-1-(5-phospho-beta-D-ribosyl)imidazole-4-carboxamide + L-glutamine = D-erythro-1-(imidazol-4-yl)glycerol 3-phosphate + 5-amino-1-(5-phospho-beta-D-ribosyl)imidazole-4-carboxamide + L-glutamate + H(+)</text>
        <dbReference type="Rhea" id="RHEA:24793"/>
        <dbReference type="ChEBI" id="CHEBI:15378"/>
        <dbReference type="ChEBI" id="CHEBI:29985"/>
        <dbReference type="ChEBI" id="CHEBI:58278"/>
        <dbReference type="ChEBI" id="CHEBI:58359"/>
        <dbReference type="ChEBI" id="CHEBI:58475"/>
        <dbReference type="ChEBI" id="CHEBI:58525"/>
        <dbReference type="EC" id="4.3.2.10"/>
    </reaction>
</comment>
<comment type="pathway">
    <text evidence="1">Amino-acid biosynthesis; L-histidine biosynthesis; L-histidine from 5-phospho-alpha-D-ribose 1-diphosphate: step 5/9.</text>
</comment>
<comment type="subunit">
    <text evidence="1">Heterodimer of HisH and HisF.</text>
</comment>
<comment type="subcellular location">
    <subcellularLocation>
        <location evidence="1">Cytoplasm</location>
    </subcellularLocation>
</comment>
<comment type="similarity">
    <text evidence="1">Belongs to the HisA/HisF family.</text>
</comment>
<evidence type="ECO:0000255" key="1">
    <source>
        <dbReference type="HAMAP-Rule" id="MF_01013"/>
    </source>
</evidence>
<accession>Q4FNT7</accession>
<protein>
    <recommendedName>
        <fullName evidence="1">Imidazole glycerol phosphate synthase subunit HisF</fullName>
        <ecNumber evidence="1">4.3.2.10</ecNumber>
    </recommendedName>
    <alternativeName>
        <fullName evidence="1">IGP synthase cyclase subunit</fullName>
    </alternativeName>
    <alternativeName>
        <fullName evidence="1">IGP synthase subunit HisF</fullName>
    </alternativeName>
    <alternativeName>
        <fullName evidence="1">ImGP synthase subunit HisF</fullName>
        <shortName evidence="1">IGPS subunit HisF</shortName>
    </alternativeName>
</protein>
<organism>
    <name type="scientific">Pelagibacter ubique (strain HTCC1062)</name>
    <dbReference type="NCBI Taxonomy" id="335992"/>
    <lineage>
        <taxon>Bacteria</taxon>
        <taxon>Pseudomonadati</taxon>
        <taxon>Pseudomonadota</taxon>
        <taxon>Alphaproteobacteria</taxon>
        <taxon>Candidatus Pelagibacterales</taxon>
        <taxon>Candidatus Pelagibacteraceae</taxon>
        <taxon>Candidatus Pelagibacter</taxon>
    </lineage>
</organism>
<keyword id="KW-0028">Amino-acid biosynthesis</keyword>
<keyword id="KW-0963">Cytoplasm</keyword>
<keyword id="KW-0368">Histidine biosynthesis</keyword>
<keyword id="KW-0456">Lyase</keyword>
<keyword id="KW-1185">Reference proteome</keyword>
<sequence>MLKNRIIPCLDVKNGRVVKGINFVDLKDAGDPVEQAKIYSDGGADEICFLDITASKENRDTIYDVVERTSKKCFVPLTVGGGVRGVEDINKLLNCGADKVSINTAAVQSPEMIIESSKKFGSQCIVVAIDAKKNGDKWEVFTHGGRNNTNIDAIEFAKKMEDNGAGELLVTSMDRDGTQIGYDNDLMFKISSTVNIPIIASGGVGNLDHLVDGIRLGNASAVLAASIFHYGTHSINEAKQYLNSKGIPVRI</sequence>